<protein>
    <recommendedName>
        <fullName>Uncharacterized membrane protein YNL019C</fullName>
    </recommendedName>
</protein>
<reference key="1">
    <citation type="journal article" date="1997" name="Nature">
        <title>The nucleotide sequence of Saccharomyces cerevisiae chromosome XIV and its evolutionary implications.</title>
        <authorList>
            <person name="Philippsen P."/>
            <person name="Kleine K."/>
            <person name="Poehlmann R."/>
            <person name="Duesterhoeft A."/>
            <person name="Hamberg K."/>
            <person name="Hegemann J.H."/>
            <person name="Obermaier B."/>
            <person name="Urrestarazu L.A."/>
            <person name="Aert R."/>
            <person name="Albermann K."/>
            <person name="Altmann R."/>
            <person name="Andre B."/>
            <person name="Baladron V."/>
            <person name="Ballesta J.P.G."/>
            <person name="Becam A.-M."/>
            <person name="Beinhauer J.D."/>
            <person name="Boskovic J."/>
            <person name="Buitrago M.J."/>
            <person name="Bussereau F."/>
            <person name="Coster F."/>
            <person name="Crouzet M."/>
            <person name="D'Angelo M."/>
            <person name="Dal Pero F."/>
            <person name="De Antoni A."/>
            <person name="del Rey F."/>
            <person name="Doignon F."/>
            <person name="Domdey H."/>
            <person name="Dubois E."/>
            <person name="Fiedler T.A."/>
            <person name="Fleig U."/>
            <person name="Floeth M."/>
            <person name="Fritz C."/>
            <person name="Gaillardin C."/>
            <person name="Garcia-Cantalejo J.M."/>
            <person name="Glansdorff N."/>
            <person name="Goffeau A."/>
            <person name="Gueldener U."/>
            <person name="Herbert C.J."/>
            <person name="Heumann K."/>
            <person name="Heuss-Neitzel D."/>
            <person name="Hilbert H."/>
            <person name="Hinni K."/>
            <person name="Iraqui Houssaini I."/>
            <person name="Jacquet M."/>
            <person name="Jimenez A."/>
            <person name="Jonniaux J.-L."/>
            <person name="Karpfinger-Hartl L."/>
            <person name="Lanfranchi G."/>
            <person name="Lepingle A."/>
            <person name="Levesque H."/>
            <person name="Lyck R."/>
            <person name="Maftahi M."/>
            <person name="Mallet L."/>
            <person name="Maurer C.T.C."/>
            <person name="Messenguy F."/>
            <person name="Mewes H.-W."/>
            <person name="Moestl D."/>
            <person name="Nasr F."/>
            <person name="Nicaud J.-M."/>
            <person name="Niedenthal R.K."/>
            <person name="Pandolfo D."/>
            <person name="Pierard A."/>
            <person name="Piravandi E."/>
            <person name="Planta R.J."/>
            <person name="Pohl T.M."/>
            <person name="Purnelle B."/>
            <person name="Rebischung C."/>
            <person name="Remacha M.A."/>
            <person name="Revuelta J.L."/>
            <person name="Rinke M."/>
            <person name="Saiz J.E."/>
            <person name="Sartorello F."/>
            <person name="Scherens B."/>
            <person name="Sen-Gupta M."/>
            <person name="Soler-Mira A."/>
            <person name="Urbanus J.H.M."/>
            <person name="Valle G."/>
            <person name="Van Dyck L."/>
            <person name="Verhasselt P."/>
            <person name="Vierendeels F."/>
            <person name="Vissers S."/>
            <person name="Voet M."/>
            <person name="Volckaert G."/>
            <person name="Wach A."/>
            <person name="Wambutt R."/>
            <person name="Wedler H."/>
            <person name="Zollner A."/>
            <person name="Hani J."/>
        </authorList>
    </citation>
    <scope>NUCLEOTIDE SEQUENCE [LARGE SCALE GENOMIC DNA]</scope>
    <source>
        <strain>ATCC 204508 / S288c</strain>
    </source>
</reference>
<reference key="2">
    <citation type="journal article" date="2014" name="G3 (Bethesda)">
        <title>The reference genome sequence of Saccharomyces cerevisiae: Then and now.</title>
        <authorList>
            <person name="Engel S.R."/>
            <person name="Dietrich F.S."/>
            <person name="Fisk D.G."/>
            <person name="Binkley G."/>
            <person name="Balakrishnan R."/>
            <person name="Costanzo M.C."/>
            <person name="Dwight S.S."/>
            <person name="Hitz B.C."/>
            <person name="Karra K."/>
            <person name="Nash R.S."/>
            <person name="Weng S."/>
            <person name="Wong E.D."/>
            <person name="Lloyd P."/>
            <person name="Skrzypek M.S."/>
            <person name="Miyasato S.R."/>
            <person name="Simison M."/>
            <person name="Cherry J.M."/>
        </authorList>
    </citation>
    <scope>GENOME REANNOTATION</scope>
    <source>
        <strain>ATCC 204508 / S288c</strain>
    </source>
</reference>
<reference key="3">
    <citation type="journal article" date="2006" name="Proc. Natl. Acad. Sci. U.S.A.">
        <title>A global topology map of the Saccharomyces cerevisiae membrane proteome.</title>
        <authorList>
            <person name="Kim H."/>
            <person name="Melen K."/>
            <person name="Oesterberg M."/>
            <person name="von Heijne G."/>
        </authorList>
    </citation>
    <scope>TOPOLOGY [LARGE SCALE ANALYSIS]</scope>
    <source>
        <strain>ATCC 208353 / W303-1A</strain>
    </source>
</reference>
<sequence>MLYSRESRTTVLFLALVTSLTVLCHSVDVTTVFTTSTITEITTVTAAPQPQNKAETALNTATNIIQTMQFLFNCAPFKWKGPLKITSCALNFIVLLLTAWGYLLKYLQENKLNSDADMEKMVGLGFGEMVGRIFGKGVGKAFTKMDITQKLVYPFEGSNRQKCLLMTVGENSIVPFHDLSTEICFDQYTLDSLSHHNHGSISILDAGSVSALGFADISSKMPSVSELYTLFGDYTIEVLGGITKLASTLNREDWQGERNGFAVLSRDRPNQTLLSVHMYSSSLL</sequence>
<feature type="signal peptide" evidence="1">
    <location>
        <begin position="1"/>
        <end position="24"/>
    </location>
</feature>
<feature type="chain" id="PRO_0000014341" description="Uncharacterized membrane protein YNL019C">
    <location>
        <begin position="25"/>
        <end position="284"/>
    </location>
</feature>
<feature type="topological domain" description="Cytoplasmic" evidence="1">
    <location>
        <begin position="25"/>
        <end position="84"/>
    </location>
</feature>
<feature type="transmembrane region" description="Helical" evidence="1">
    <location>
        <begin position="85"/>
        <end position="104"/>
    </location>
</feature>
<feature type="topological domain" description="Extracellular" evidence="1">
    <location>
        <begin position="105"/>
        <end position="284"/>
    </location>
</feature>
<feature type="glycosylation site" description="N-linked (GlcNAc...) asparagine" evidence="1">
    <location>
        <position position="270"/>
    </location>
</feature>
<name>YNB9_YEAST</name>
<proteinExistence type="evidence at protein level"/>
<comment type="subcellular location">
    <subcellularLocation>
        <location>Cell membrane</location>
        <topology>Single-pass membrane protein</topology>
    </subcellularLocation>
</comment>
<comment type="similarity">
    <text evidence="2">To yeast YNL033w.</text>
</comment>
<evidence type="ECO:0000255" key="1"/>
<evidence type="ECO:0000305" key="2"/>
<accession>P53975</accession>
<accession>D6W1G0</accession>
<keyword id="KW-1003">Cell membrane</keyword>
<keyword id="KW-0325">Glycoprotein</keyword>
<keyword id="KW-0472">Membrane</keyword>
<keyword id="KW-1185">Reference proteome</keyword>
<keyword id="KW-0732">Signal</keyword>
<keyword id="KW-0812">Transmembrane</keyword>
<keyword id="KW-1133">Transmembrane helix</keyword>
<gene>
    <name type="ordered locus">YNL019C</name>
    <name type="ORF">N2827</name>
</gene>
<organism>
    <name type="scientific">Saccharomyces cerevisiae (strain ATCC 204508 / S288c)</name>
    <name type="common">Baker's yeast</name>
    <dbReference type="NCBI Taxonomy" id="559292"/>
    <lineage>
        <taxon>Eukaryota</taxon>
        <taxon>Fungi</taxon>
        <taxon>Dikarya</taxon>
        <taxon>Ascomycota</taxon>
        <taxon>Saccharomycotina</taxon>
        <taxon>Saccharomycetes</taxon>
        <taxon>Saccharomycetales</taxon>
        <taxon>Saccharomycetaceae</taxon>
        <taxon>Saccharomyces</taxon>
    </lineage>
</organism>
<dbReference type="EMBL" id="Z71295">
    <property type="protein sequence ID" value="CAA95881.1"/>
    <property type="molecule type" value="Genomic_DNA"/>
</dbReference>
<dbReference type="EMBL" id="BK006947">
    <property type="protein sequence ID" value="DAA10526.1"/>
    <property type="molecule type" value="Genomic_DNA"/>
</dbReference>
<dbReference type="PIR" id="S62931">
    <property type="entry name" value="S62931"/>
</dbReference>
<dbReference type="RefSeq" id="NP_014379.3">
    <property type="nucleotide sequence ID" value="NM_001182858.3"/>
</dbReference>
<dbReference type="BioGRID" id="35807">
    <property type="interactions" value="12"/>
</dbReference>
<dbReference type="DIP" id="DIP-4382N"/>
<dbReference type="FunCoup" id="P53975">
    <property type="interactions" value="25"/>
</dbReference>
<dbReference type="IntAct" id="P53975">
    <property type="interactions" value="1"/>
</dbReference>
<dbReference type="MINT" id="P53975"/>
<dbReference type="STRING" id="4932.YNL019C"/>
<dbReference type="GlyGen" id="P53975">
    <property type="glycosylation" value="1 site"/>
</dbReference>
<dbReference type="PaxDb" id="4932-YNL019C"/>
<dbReference type="EnsemblFungi" id="YNL019C_mRNA">
    <property type="protein sequence ID" value="YNL019C"/>
    <property type="gene ID" value="YNL019C"/>
</dbReference>
<dbReference type="GeneID" id="855712"/>
<dbReference type="KEGG" id="sce:YNL019C"/>
<dbReference type="AGR" id="SGD:S000004964"/>
<dbReference type="SGD" id="S000004964">
    <property type="gene designation" value="YNL019C"/>
</dbReference>
<dbReference type="VEuPathDB" id="FungiDB:YNL019C"/>
<dbReference type="HOGENOM" id="CLU_980567_0_0_1"/>
<dbReference type="InParanoid" id="P53975"/>
<dbReference type="OMA" id="DISSKMX"/>
<dbReference type="OrthoDB" id="4051121at2759"/>
<dbReference type="BioCyc" id="YEAST:G3O-33057-MONOMER"/>
<dbReference type="PRO" id="PR:P53975"/>
<dbReference type="Proteomes" id="UP000002311">
    <property type="component" value="Chromosome XIV"/>
</dbReference>
<dbReference type="RNAct" id="P53975">
    <property type="molecule type" value="protein"/>
</dbReference>
<dbReference type="GO" id="GO:0000324">
    <property type="term" value="C:fungal-type vacuole"/>
    <property type="evidence" value="ECO:0007005"/>
    <property type="project" value="SGD"/>
</dbReference>
<dbReference type="GO" id="GO:0005886">
    <property type="term" value="C:plasma membrane"/>
    <property type="evidence" value="ECO:0007669"/>
    <property type="project" value="UniProtKB-SubCell"/>
</dbReference>
<dbReference type="GO" id="GO:0005628">
    <property type="term" value="C:prospore membrane"/>
    <property type="evidence" value="ECO:0007005"/>
    <property type="project" value="SGD"/>
</dbReference>